<proteinExistence type="inferred from homology"/>
<sequence length="119" mass="13267">MATDTTEVKAIARFIRMSPYKVRRVLDQIRGLSYREALIILEFMPYRATEPVLTLLRSAAANAEHNAGLDRAELVITQAYADQGPVLKRFQPRAQGRAYQIRKPTCHITLAVAANAGAK</sequence>
<accession>Q8YPI4</accession>
<evidence type="ECO:0000255" key="1">
    <source>
        <dbReference type="HAMAP-Rule" id="MF_01331"/>
    </source>
</evidence>
<evidence type="ECO:0000305" key="2"/>
<keyword id="KW-1185">Reference proteome</keyword>
<keyword id="KW-0687">Ribonucleoprotein</keyword>
<keyword id="KW-0689">Ribosomal protein</keyword>
<keyword id="KW-0694">RNA-binding</keyword>
<keyword id="KW-0699">rRNA-binding</keyword>
<dbReference type="EMBL" id="BA000019">
    <property type="protein sequence ID" value="BAB75909.1"/>
    <property type="molecule type" value="Genomic_DNA"/>
</dbReference>
<dbReference type="PIR" id="AC2332">
    <property type="entry name" value="AC2332"/>
</dbReference>
<dbReference type="RefSeq" id="WP_010998348.1">
    <property type="nucleotide sequence ID" value="NZ_RSCN01000010.1"/>
</dbReference>
<dbReference type="SMR" id="Q8YPI4"/>
<dbReference type="STRING" id="103690.gene:10496259"/>
<dbReference type="GeneID" id="58723354"/>
<dbReference type="KEGG" id="ana:all4210"/>
<dbReference type="eggNOG" id="COG0091">
    <property type="taxonomic scope" value="Bacteria"/>
</dbReference>
<dbReference type="OrthoDB" id="9805969at2"/>
<dbReference type="Proteomes" id="UP000002483">
    <property type="component" value="Chromosome"/>
</dbReference>
<dbReference type="GO" id="GO:0022625">
    <property type="term" value="C:cytosolic large ribosomal subunit"/>
    <property type="evidence" value="ECO:0007669"/>
    <property type="project" value="TreeGrafter"/>
</dbReference>
<dbReference type="GO" id="GO:0019843">
    <property type="term" value="F:rRNA binding"/>
    <property type="evidence" value="ECO:0007669"/>
    <property type="project" value="UniProtKB-UniRule"/>
</dbReference>
<dbReference type="GO" id="GO:0003735">
    <property type="term" value="F:structural constituent of ribosome"/>
    <property type="evidence" value="ECO:0007669"/>
    <property type="project" value="InterPro"/>
</dbReference>
<dbReference type="GO" id="GO:0006412">
    <property type="term" value="P:translation"/>
    <property type="evidence" value="ECO:0007669"/>
    <property type="project" value="UniProtKB-UniRule"/>
</dbReference>
<dbReference type="CDD" id="cd00336">
    <property type="entry name" value="Ribosomal_L22"/>
    <property type="match status" value="1"/>
</dbReference>
<dbReference type="FunFam" id="3.90.470.10:FF:000004">
    <property type="entry name" value="50S ribosomal protein L22, chloroplastic"/>
    <property type="match status" value="1"/>
</dbReference>
<dbReference type="Gene3D" id="3.90.470.10">
    <property type="entry name" value="Ribosomal protein L22/L17"/>
    <property type="match status" value="1"/>
</dbReference>
<dbReference type="HAMAP" id="MF_01331_B">
    <property type="entry name" value="Ribosomal_uL22_B"/>
    <property type="match status" value="1"/>
</dbReference>
<dbReference type="InterPro" id="IPR001063">
    <property type="entry name" value="Ribosomal_uL22"/>
</dbReference>
<dbReference type="InterPro" id="IPR005727">
    <property type="entry name" value="Ribosomal_uL22_bac/chlpt-type"/>
</dbReference>
<dbReference type="InterPro" id="IPR047867">
    <property type="entry name" value="Ribosomal_uL22_bac/org-type"/>
</dbReference>
<dbReference type="InterPro" id="IPR018260">
    <property type="entry name" value="Ribosomal_uL22_CS"/>
</dbReference>
<dbReference type="InterPro" id="IPR036394">
    <property type="entry name" value="Ribosomal_uL22_sf"/>
</dbReference>
<dbReference type="NCBIfam" id="TIGR01044">
    <property type="entry name" value="rplV_bact"/>
    <property type="match status" value="1"/>
</dbReference>
<dbReference type="PANTHER" id="PTHR13501">
    <property type="entry name" value="CHLOROPLAST 50S RIBOSOMAL PROTEIN L22-RELATED"/>
    <property type="match status" value="1"/>
</dbReference>
<dbReference type="PANTHER" id="PTHR13501:SF8">
    <property type="entry name" value="LARGE RIBOSOMAL SUBUNIT PROTEIN UL22M"/>
    <property type="match status" value="1"/>
</dbReference>
<dbReference type="Pfam" id="PF00237">
    <property type="entry name" value="Ribosomal_L22"/>
    <property type="match status" value="1"/>
</dbReference>
<dbReference type="SUPFAM" id="SSF54843">
    <property type="entry name" value="Ribosomal protein L22"/>
    <property type="match status" value="1"/>
</dbReference>
<dbReference type="PROSITE" id="PS00464">
    <property type="entry name" value="RIBOSOMAL_L22"/>
    <property type="match status" value="1"/>
</dbReference>
<name>RL22_NOSS1</name>
<protein>
    <recommendedName>
        <fullName evidence="1">Large ribosomal subunit protein uL22</fullName>
    </recommendedName>
    <alternativeName>
        <fullName evidence="2">50S ribosomal protein L22</fullName>
    </alternativeName>
</protein>
<comment type="function">
    <text evidence="1">This protein binds specifically to 23S rRNA; its binding is stimulated by other ribosomal proteins, e.g. L4, L17, and L20. It is important during the early stages of 50S assembly. It makes multiple contacts with different domains of the 23S rRNA in the assembled 50S subunit and ribosome (By similarity).</text>
</comment>
<comment type="function">
    <text evidence="1">The globular domain of the protein is located near the polypeptide exit tunnel on the outside of the subunit, while an extended beta-hairpin is found that lines the wall of the exit tunnel in the center of the 70S ribosome.</text>
</comment>
<comment type="subunit">
    <text evidence="1">Part of the 50S ribosomal subunit.</text>
</comment>
<comment type="similarity">
    <text evidence="1">Belongs to the universal ribosomal protein uL22 family.</text>
</comment>
<organism>
    <name type="scientific">Nostoc sp. (strain PCC 7120 / SAG 25.82 / UTEX 2576)</name>
    <dbReference type="NCBI Taxonomy" id="103690"/>
    <lineage>
        <taxon>Bacteria</taxon>
        <taxon>Bacillati</taxon>
        <taxon>Cyanobacteriota</taxon>
        <taxon>Cyanophyceae</taxon>
        <taxon>Nostocales</taxon>
        <taxon>Nostocaceae</taxon>
        <taxon>Nostoc</taxon>
    </lineage>
</organism>
<reference key="1">
    <citation type="journal article" date="2001" name="DNA Res.">
        <title>Complete genomic sequence of the filamentous nitrogen-fixing cyanobacterium Anabaena sp. strain PCC 7120.</title>
        <authorList>
            <person name="Kaneko T."/>
            <person name="Nakamura Y."/>
            <person name="Wolk C.P."/>
            <person name="Kuritz T."/>
            <person name="Sasamoto S."/>
            <person name="Watanabe A."/>
            <person name="Iriguchi M."/>
            <person name="Ishikawa A."/>
            <person name="Kawashima K."/>
            <person name="Kimura T."/>
            <person name="Kishida Y."/>
            <person name="Kohara M."/>
            <person name="Matsumoto M."/>
            <person name="Matsuno A."/>
            <person name="Muraki A."/>
            <person name="Nakazaki N."/>
            <person name="Shimpo S."/>
            <person name="Sugimoto M."/>
            <person name="Takazawa M."/>
            <person name="Yamada M."/>
            <person name="Yasuda M."/>
            <person name="Tabata S."/>
        </authorList>
    </citation>
    <scope>NUCLEOTIDE SEQUENCE [LARGE SCALE GENOMIC DNA]</scope>
    <source>
        <strain>PCC 7120 / SAG 25.82 / UTEX 2576</strain>
    </source>
</reference>
<feature type="chain" id="PRO_0000125109" description="Large ribosomal subunit protein uL22">
    <location>
        <begin position="1"/>
        <end position="119"/>
    </location>
</feature>
<gene>
    <name evidence="1" type="primary">rplV</name>
    <name evidence="1" type="synonym">rpl22</name>
    <name type="ordered locus">all4210</name>
</gene>